<dbReference type="EC" id="2.3.2.27"/>
<dbReference type="EMBL" id="AF079180">
    <property type="protein sequence ID" value="AAC69854.1"/>
    <property type="molecule type" value="mRNA"/>
</dbReference>
<dbReference type="EMBL" id="AC002409">
    <property type="protein sequence ID" value="AAB86443.1"/>
    <property type="molecule type" value="Genomic_DNA"/>
</dbReference>
<dbReference type="EMBL" id="CP002685">
    <property type="protein sequence ID" value="AEC09886.1"/>
    <property type="molecule type" value="Genomic_DNA"/>
</dbReference>
<dbReference type="EMBL" id="CP002685">
    <property type="protein sequence ID" value="AEC09887.1"/>
    <property type="molecule type" value="Genomic_DNA"/>
</dbReference>
<dbReference type="EMBL" id="CP002685">
    <property type="protein sequence ID" value="AEC09888.1"/>
    <property type="molecule type" value="Genomic_DNA"/>
</dbReference>
<dbReference type="EMBL" id="CP002685">
    <property type="protein sequence ID" value="ANM62005.1"/>
    <property type="molecule type" value="Genomic_DNA"/>
</dbReference>
<dbReference type="EMBL" id="AY139987">
    <property type="protein sequence ID" value="AAM98130.1"/>
    <property type="molecule type" value="mRNA"/>
</dbReference>
<dbReference type="EMBL" id="BT008726">
    <property type="protein sequence ID" value="AAP42739.1"/>
    <property type="molecule type" value="mRNA"/>
</dbReference>
<dbReference type="PIR" id="T00747">
    <property type="entry name" value="T00747"/>
</dbReference>
<dbReference type="RefSeq" id="NP_001324188.1">
    <property type="nucleotide sequence ID" value="NM_001336872.1"/>
</dbReference>
<dbReference type="RefSeq" id="NP_565942.1">
    <property type="nucleotide sequence ID" value="NM_129646.5"/>
</dbReference>
<dbReference type="RefSeq" id="NP_973651.1">
    <property type="nucleotide sequence ID" value="NM_201922.3"/>
</dbReference>
<dbReference type="RefSeq" id="NP_973652.1">
    <property type="nucleotide sequence ID" value="NM_201923.4"/>
</dbReference>
<dbReference type="SMR" id="O22197"/>
<dbReference type="FunCoup" id="O22197">
    <property type="interactions" value="2923"/>
</dbReference>
<dbReference type="STRING" id="3702.O22197"/>
<dbReference type="PaxDb" id="3702-AT2G40830.2"/>
<dbReference type="ProteomicsDB" id="236932"/>
<dbReference type="EnsemblPlants" id="AT2G40830.1">
    <property type="protein sequence ID" value="AT2G40830.1"/>
    <property type="gene ID" value="AT2G40830"/>
</dbReference>
<dbReference type="EnsemblPlants" id="AT2G40830.2">
    <property type="protein sequence ID" value="AT2G40830.2"/>
    <property type="gene ID" value="AT2G40830"/>
</dbReference>
<dbReference type="EnsemblPlants" id="AT2G40830.3">
    <property type="protein sequence ID" value="AT2G40830.3"/>
    <property type="gene ID" value="AT2G40830"/>
</dbReference>
<dbReference type="EnsemblPlants" id="AT2G40830.4">
    <property type="protein sequence ID" value="AT2G40830.4"/>
    <property type="gene ID" value="AT2G40830"/>
</dbReference>
<dbReference type="GeneID" id="818680"/>
<dbReference type="Gramene" id="AT2G40830.1">
    <property type="protein sequence ID" value="AT2G40830.1"/>
    <property type="gene ID" value="AT2G40830"/>
</dbReference>
<dbReference type="Gramene" id="AT2G40830.2">
    <property type="protein sequence ID" value="AT2G40830.2"/>
    <property type="gene ID" value="AT2G40830"/>
</dbReference>
<dbReference type="Gramene" id="AT2G40830.3">
    <property type="protein sequence ID" value="AT2G40830.3"/>
    <property type="gene ID" value="AT2G40830"/>
</dbReference>
<dbReference type="Gramene" id="AT2G40830.4">
    <property type="protein sequence ID" value="AT2G40830.4"/>
    <property type="gene ID" value="AT2G40830"/>
</dbReference>
<dbReference type="KEGG" id="ath:AT2G40830"/>
<dbReference type="Araport" id="AT2G40830"/>
<dbReference type="TAIR" id="AT2G40830">
    <property type="gene designation" value="RHC1A"/>
</dbReference>
<dbReference type="eggNOG" id="KOG0800">
    <property type="taxonomic scope" value="Eukaryota"/>
</dbReference>
<dbReference type="HOGENOM" id="CLU_034892_1_2_1"/>
<dbReference type="InParanoid" id="O22197"/>
<dbReference type="OMA" id="DMVHVNP"/>
<dbReference type="PhylomeDB" id="O22197"/>
<dbReference type="UniPathway" id="UPA00143"/>
<dbReference type="PRO" id="PR:O22197"/>
<dbReference type="Proteomes" id="UP000006548">
    <property type="component" value="Chromosome 2"/>
</dbReference>
<dbReference type="ExpressionAtlas" id="O22197">
    <property type="expression patterns" value="baseline and differential"/>
</dbReference>
<dbReference type="GO" id="GO:0005634">
    <property type="term" value="C:nucleus"/>
    <property type="evidence" value="ECO:0000314"/>
    <property type="project" value="TAIR"/>
</dbReference>
<dbReference type="GO" id="GO:0009505">
    <property type="term" value="C:plant-type cell wall"/>
    <property type="evidence" value="ECO:0007005"/>
    <property type="project" value="TAIR"/>
</dbReference>
<dbReference type="GO" id="GO:0061630">
    <property type="term" value="F:ubiquitin protein ligase activity"/>
    <property type="evidence" value="ECO:0000314"/>
    <property type="project" value="TAIR"/>
</dbReference>
<dbReference type="GO" id="GO:0008270">
    <property type="term" value="F:zinc ion binding"/>
    <property type="evidence" value="ECO:0007669"/>
    <property type="project" value="UniProtKB-KW"/>
</dbReference>
<dbReference type="GO" id="GO:0009938">
    <property type="term" value="P:negative regulation of gibberellic acid mediated signaling pathway"/>
    <property type="evidence" value="ECO:0000315"/>
    <property type="project" value="TAIR"/>
</dbReference>
<dbReference type="GO" id="GO:0016567">
    <property type="term" value="P:protein ubiquitination"/>
    <property type="evidence" value="ECO:0000314"/>
    <property type="project" value="TAIR"/>
</dbReference>
<dbReference type="GO" id="GO:0009651">
    <property type="term" value="P:response to salt stress"/>
    <property type="evidence" value="ECO:0000315"/>
    <property type="project" value="TAIR"/>
</dbReference>
<dbReference type="GO" id="GO:0006511">
    <property type="term" value="P:ubiquitin-dependent protein catabolic process"/>
    <property type="evidence" value="ECO:0000314"/>
    <property type="project" value="TAIR"/>
</dbReference>
<dbReference type="CDD" id="cd16667">
    <property type="entry name" value="RING-H2_RNF126-like"/>
    <property type="match status" value="1"/>
</dbReference>
<dbReference type="FunFam" id="3.30.40.10:FF:000022">
    <property type="entry name" value="E3 ubiquitin-protein ligase RING1-like"/>
    <property type="match status" value="1"/>
</dbReference>
<dbReference type="Gene3D" id="3.30.40.10">
    <property type="entry name" value="Zinc/RING finger domain, C3HC4 (zinc finger)"/>
    <property type="match status" value="1"/>
</dbReference>
<dbReference type="InterPro" id="IPR039525">
    <property type="entry name" value="RNF126-like_zinc-ribbon"/>
</dbReference>
<dbReference type="InterPro" id="IPR001841">
    <property type="entry name" value="Znf_RING"/>
</dbReference>
<dbReference type="InterPro" id="IPR013083">
    <property type="entry name" value="Znf_RING/FYVE/PHD"/>
</dbReference>
<dbReference type="PANTHER" id="PTHR15710">
    <property type="entry name" value="E3 UBIQUITIN-PROTEIN LIGASE PRAJA"/>
    <property type="match status" value="1"/>
</dbReference>
<dbReference type="PANTHER" id="PTHR15710:SF34">
    <property type="entry name" value="E3 UBIQUITIN-PROTEIN LIGASE RHC1A-RELATED"/>
    <property type="match status" value="1"/>
</dbReference>
<dbReference type="Pfam" id="PF13639">
    <property type="entry name" value="zf-RING_2"/>
    <property type="match status" value="1"/>
</dbReference>
<dbReference type="Pfam" id="PF14369">
    <property type="entry name" value="Zn_ribbon_19"/>
    <property type="match status" value="1"/>
</dbReference>
<dbReference type="SMART" id="SM00184">
    <property type="entry name" value="RING"/>
    <property type="match status" value="1"/>
</dbReference>
<dbReference type="SUPFAM" id="SSF57850">
    <property type="entry name" value="RING/U-box"/>
    <property type="match status" value="1"/>
</dbReference>
<dbReference type="PROSITE" id="PS50089">
    <property type="entry name" value="ZF_RING_2"/>
    <property type="match status" value="1"/>
</dbReference>
<reference key="1">
    <citation type="journal article" date="1998" name="FEBS Lett.">
        <title>Widespread occurrence of a highly conserved RING-H2 zinc finger motif in the model plant Arabidopsis thaliana.</title>
        <authorList>
            <person name="Jensen R.B."/>
            <person name="Jensen K.L."/>
            <person name="Jespersen H.M."/>
            <person name="Skriver K."/>
        </authorList>
    </citation>
    <scope>NUCLEOTIDE SEQUENCE [MRNA]</scope>
    <source>
        <strain>cv. Columbia</strain>
    </source>
</reference>
<reference key="2">
    <citation type="journal article" date="1999" name="Nature">
        <title>Sequence and analysis of chromosome 2 of the plant Arabidopsis thaliana.</title>
        <authorList>
            <person name="Lin X."/>
            <person name="Kaul S."/>
            <person name="Rounsley S.D."/>
            <person name="Shea T.P."/>
            <person name="Benito M.-I."/>
            <person name="Town C.D."/>
            <person name="Fujii C.Y."/>
            <person name="Mason T.M."/>
            <person name="Bowman C.L."/>
            <person name="Barnstead M.E."/>
            <person name="Feldblyum T.V."/>
            <person name="Buell C.R."/>
            <person name="Ketchum K.A."/>
            <person name="Lee J.J."/>
            <person name="Ronning C.M."/>
            <person name="Koo H.L."/>
            <person name="Moffat K.S."/>
            <person name="Cronin L.A."/>
            <person name="Shen M."/>
            <person name="Pai G."/>
            <person name="Van Aken S."/>
            <person name="Umayam L."/>
            <person name="Tallon L.J."/>
            <person name="Gill J.E."/>
            <person name="Adams M.D."/>
            <person name="Carrera A.J."/>
            <person name="Creasy T.H."/>
            <person name="Goodman H.M."/>
            <person name="Somerville C.R."/>
            <person name="Copenhaver G.P."/>
            <person name="Preuss D."/>
            <person name="Nierman W.C."/>
            <person name="White O."/>
            <person name="Eisen J.A."/>
            <person name="Salzberg S.L."/>
            <person name="Fraser C.M."/>
            <person name="Venter J.C."/>
        </authorList>
    </citation>
    <scope>NUCLEOTIDE SEQUENCE [LARGE SCALE GENOMIC DNA]</scope>
    <source>
        <strain>cv. Columbia</strain>
    </source>
</reference>
<reference key="3">
    <citation type="journal article" date="2017" name="Plant J.">
        <title>Araport11: a complete reannotation of the Arabidopsis thaliana reference genome.</title>
        <authorList>
            <person name="Cheng C.Y."/>
            <person name="Krishnakumar V."/>
            <person name="Chan A.P."/>
            <person name="Thibaud-Nissen F."/>
            <person name="Schobel S."/>
            <person name="Town C.D."/>
        </authorList>
    </citation>
    <scope>GENOME REANNOTATION</scope>
    <source>
        <strain>cv. Columbia</strain>
    </source>
</reference>
<reference key="4">
    <citation type="journal article" date="2003" name="Science">
        <title>Empirical analysis of transcriptional activity in the Arabidopsis genome.</title>
        <authorList>
            <person name="Yamada K."/>
            <person name="Lim J."/>
            <person name="Dale J.M."/>
            <person name="Chen H."/>
            <person name="Shinn P."/>
            <person name="Palm C.J."/>
            <person name="Southwick A.M."/>
            <person name="Wu H.C."/>
            <person name="Kim C.J."/>
            <person name="Nguyen M."/>
            <person name="Pham P.K."/>
            <person name="Cheuk R.F."/>
            <person name="Karlin-Newmann G."/>
            <person name="Liu S.X."/>
            <person name="Lam B."/>
            <person name="Sakano H."/>
            <person name="Wu T."/>
            <person name="Yu G."/>
            <person name="Miranda M."/>
            <person name="Quach H.L."/>
            <person name="Tripp M."/>
            <person name="Chang C.H."/>
            <person name="Lee J.M."/>
            <person name="Toriumi M.J."/>
            <person name="Chan M.M."/>
            <person name="Tang C.C."/>
            <person name="Onodera C.S."/>
            <person name="Deng J.M."/>
            <person name="Akiyama K."/>
            <person name="Ansari Y."/>
            <person name="Arakawa T."/>
            <person name="Banh J."/>
            <person name="Banno F."/>
            <person name="Bowser L."/>
            <person name="Brooks S.Y."/>
            <person name="Carninci P."/>
            <person name="Chao Q."/>
            <person name="Choy N."/>
            <person name="Enju A."/>
            <person name="Goldsmith A.D."/>
            <person name="Gurjal M."/>
            <person name="Hansen N.F."/>
            <person name="Hayashizaki Y."/>
            <person name="Johnson-Hopson C."/>
            <person name="Hsuan V.W."/>
            <person name="Iida K."/>
            <person name="Karnes M."/>
            <person name="Khan S."/>
            <person name="Koesema E."/>
            <person name="Ishida J."/>
            <person name="Jiang P.X."/>
            <person name="Jones T."/>
            <person name="Kawai J."/>
            <person name="Kamiya A."/>
            <person name="Meyers C."/>
            <person name="Nakajima M."/>
            <person name="Narusaka M."/>
            <person name="Seki M."/>
            <person name="Sakurai T."/>
            <person name="Satou M."/>
            <person name="Tamse R."/>
            <person name="Vaysberg M."/>
            <person name="Wallender E.K."/>
            <person name="Wong C."/>
            <person name="Yamamura Y."/>
            <person name="Yuan S."/>
            <person name="Shinozaki K."/>
            <person name="Davis R.W."/>
            <person name="Theologis A."/>
            <person name="Ecker J.R."/>
        </authorList>
    </citation>
    <scope>NUCLEOTIDE SEQUENCE [LARGE SCALE MRNA]</scope>
    <source>
        <strain>cv. Columbia</strain>
    </source>
</reference>
<accession>O22197</accession>
<evidence type="ECO:0000250" key="1">
    <source>
        <dbReference type="UniProtKB" id="Q8LPN7"/>
    </source>
</evidence>
<evidence type="ECO:0000250" key="2">
    <source>
        <dbReference type="UniProtKB" id="Q9ZT50"/>
    </source>
</evidence>
<evidence type="ECO:0000255" key="3">
    <source>
        <dbReference type="PROSITE-ProRule" id="PRU00175"/>
    </source>
</evidence>
<evidence type="ECO:0000256" key="4">
    <source>
        <dbReference type="SAM" id="MobiDB-lite"/>
    </source>
</evidence>
<evidence type="ECO:0000303" key="5">
    <source>
    </source>
</evidence>
<evidence type="ECO:0000305" key="6"/>
<evidence type="ECO:0000312" key="7">
    <source>
        <dbReference type="Araport" id="AT2G40830"/>
    </source>
</evidence>
<keyword id="KW-0007">Acetylation</keyword>
<keyword id="KW-0479">Metal-binding</keyword>
<keyword id="KW-1185">Reference proteome</keyword>
<keyword id="KW-0808">Transferase</keyword>
<keyword id="KW-0833">Ubl conjugation pathway</keyword>
<keyword id="KW-0862">Zinc</keyword>
<keyword id="KW-0863">Zinc-finger</keyword>
<name>RHC1A_ARATH</name>
<protein>
    <recommendedName>
        <fullName evidence="6">Probable E3 ubiquitin-protein ligase RHC1A</fullName>
        <ecNumber>2.3.2.27</ecNumber>
    </recommendedName>
    <alternativeName>
        <fullName evidence="5">RING-H2 finger C1a</fullName>
    </alternativeName>
    <alternativeName>
        <fullName evidence="6">RING-H2 zinc finger protein RHC1a</fullName>
    </alternativeName>
    <alternativeName>
        <fullName evidence="6">RING-type E3 ubiquitin transferase RHC1A</fullName>
    </alternativeName>
</protein>
<comment type="function">
    <text evidence="2">Probable E3 ubiquitin-protein ligase that may possess E3 ubiquitin ligase activity in vitro.</text>
</comment>
<comment type="catalytic activity">
    <reaction>
        <text>S-ubiquitinyl-[E2 ubiquitin-conjugating enzyme]-L-cysteine + [acceptor protein]-L-lysine = [E2 ubiquitin-conjugating enzyme]-L-cysteine + N(6)-ubiquitinyl-[acceptor protein]-L-lysine.</text>
        <dbReference type="EC" id="2.3.2.27"/>
    </reaction>
</comment>
<comment type="pathway">
    <text evidence="6">Protein modification; protein ubiquitination.</text>
</comment>
<sequence>MSSSRNTHWCHRCQRAVRLHGQEPVCFYCGGGFVEELDMAQASPFDMFRSHRGVVERDQTFDLMDAFSVFMRNRLAERSHDREIRGRTISSGPENFPGLAPLLIFGGQVPYRLTGDNAVEALFNGGSPGIGITRGNTGDYFFGPGLEELFEQLSAGTTRRGPPPAPRSAIDALPTIKIAQRHLRSSDSNCPVCKDEFELGSEAKQMPCNHIYHSDCIVPWLVQHNSCPVCRQELPSASGPSSSQNRTTPTRNYRSSSSSSSSNSRENGNERRNPFSSFWPFRSSGSSSSSTQNRGGTRNSDTSDENHNYHQQQHQQSYMGYSGWPFDY</sequence>
<feature type="initiator methionine" description="Removed" evidence="1">
    <location>
        <position position="1"/>
    </location>
</feature>
<feature type="chain" id="PRO_0000436415" description="Probable E3 ubiquitin-protein ligase RHC1A">
    <location>
        <begin position="2"/>
        <end position="328"/>
    </location>
</feature>
<feature type="zinc finger region" description="RING-type; atypical" evidence="3">
    <location>
        <begin position="190"/>
        <end position="231"/>
    </location>
</feature>
<feature type="region of interest" description="Disordered" evidence="4">
    <location>
        <begin position="233"/>
        <end position="324"/>
    </location>
</feature>
<feature type="compositionally biased region" description="Polar residues" evidence="4">
    <location>
        <begin position="238"/>
        <end position="250"/>
    </location>
</feature>
<feature type="compositionally biased region" description="Low complexity" evidence="4">
    <location>
        <begin position="251"/>
        <end position="266"/>
    </location>
</feature>
<feature type="compositionally biased region" description="Low complexity" evidence="4">
    <location>
        <begin position="275"/>
        <end position="290"/>
    </location>
</feature>
<feature type="compositionally biased region" description="Polar residues" evidence="4">
    <location>
        <begin position="291"/>
        <end position="300"/>
    </location>
</feature>
<feature type="modified residue" description="N-acetylserine" evidence="1">
    <location>
        <position position="2"/>
    </location>
</feature>
<proteinExistence type="evidence at transcript level"/>
<gene>
    <name evidence="5" type="primary">RHC1A</name>
    <name evidence="7" type="ordered locus">At2g40830</name>
</gene>
<organism>
    <name type="scientific">Arabidopsis thaliana</name>
    <name type="common">Mouse-ear cress</name>
    <dbReference type="NCBI Taxonomy" id="3702"/>
    <lineage>
        <taxon>Eukaryota</taxon>
        <taxon>Viridiplantae</taxon>
        <taxon>Streptophyta</taxon>
        <taxon>Embryophyta</taxon>
        <taxon>Tracheophyta</taxon>
        <taxon>Spermatophyta</taxon>
        <taxon>Magnoliopsida</taxon>
        <taxon>eudicotyledons</taxon>
        <taxon>Gunneridae</taxon>
        <taxon>Pentapetalae</taxon>
        <taxon>rosids</taxon>
        <taxon>malvids</taxon>
        <taxon>Brassicales</taxon>
        <taxon>Brassicaceae</taxon>
        <taxon>Camelineae</taxon>
        <taxon>Arabidopsis</taxon>
    </lineage>
</organism>